<feature type="chain" id="PRO_0000190022" description="Flagellar biosynthesis protein FlhA">
    <location>
        <begin position="1"/>
        <end position="692"/>
    </location>
</feature>
<feature type="transmembrane region" description="Helical" evidence="2">
    <location>
        <begin position="24"/>
        <end position="44"/>
    </location>
</feature>
<feature type="transmembrane region" description="Helical" evidence="2">
    <location>
        <begin position="46"/>
        <end position="66"/>
    </location>
</feature>
<feature type="transmembrane region" description="Helical" evidence="2">
    <location>
        <begin position="71"/>
        <end position="91"/>
    </location>
</feature>
<feature type="transmembrane region" description="Helical" evidence="2">
    <location>
        <begin position="121"/>
        <end position="141"/>
    </location>
</feature>
<feature type="transmembrane region" description="Helical" evidence="2">
    <location>
        <begin position="209"/>
        <end position="229"/>
    </location>
</feature>
<feature type="transmembrane region" description="Helical" evidence="2">
    <location>
        <begin position="247"/>
        <end position="267"/>
    </location>
</feature>
<feature type="transmembrane region" description="Helical" evidence="2">
    <location>
        <begin position="296"/>
        <end position="316"/>
    </location>
</feature>
<feature type="transmembrane region" description="Helical" evidence="2">
    <location>
        <begin position="446"/>
        <end position="466"/>
    </location>
</feature>
<organism>
    <name type="scientific">Yersinia enterocolitica</name>
    <dbReference type="NCBI Taxonomy" id="630"/>
    <lineage>
        <taxon>Bacteria</taxon>
        <taxon>Pseudomonadati</taxon>
        <taxon>Pseudomonadota</taxon>
        <taxon>Gammaproteobacteria</taxon>
        <taxon>Enterobacterales</taxon>
        <taxon>Yersiniaceae</taxon>
        <taxon>Yersinia</taxon>
    </lineage>
</organism>
<name>FLHA_YEREN</name>
<accession>Q56887</accession>
<gene>
    <name type="primary">flhA</name>
</gene>
<sequence>MANLAALLRLPGNFKDTQWQILAGPILILMILSMMVLPLPPFILDLLFTFNIALSIMVLLVAMFTQRTLDFAAFPTILLFSTLLRLSLNVASTRIILMDGHTGAAAAGRVVEAFGHFLVGGNFAIGIVVFVILVIINFMVITKGAGRIAEVGARFVLDGMPGKQMAIDADLNAGLIGEDEAKKRRSDVTQEADFYGSMDGASKFVRGDAVAGLLIMVINVVGGLLVGVLQHNMAVGHAAETYTLLTIGDGLVAQIPALVISTAAGVIVTRVSTDQDVGQQMVTQLFNNPRVMVLSAAVLGLLGMVPGMPNFVFLLFTAALLALAWRLRGKQSQQPTAAEAPVIQDQQQATEATWSDVQLEDPLGMEVGYRLIPMVDFQQNGELLGRIRSIRKKFAQEMGYLPPVVHIRDNLELPPASYRILMKGVEIGSGEAHPGRWLAINPGNAVGTLPGEATQDPAFGLAAVWIESALREQAQIQGFTVVEASTVVATHLNHLISQYASDLFGRQETQQLLDRVSQEMPKLTEDFIPGVVTLTTLHKVLQNLLMERVSIRDMRTIIETLAEHAPNQTDPYELTAVVRVALGRSIAQQWFPGTGEIQVIGLDAALERLLLQALQGGSGLEPGLADRLLEQSRQALQRQEMLGAPPVLLVNHALRALLARFLRRSLPQMVVLSNLEIGDNRQIRMTSTIGVA</sequence>
<proteinExistence type="inferred from homology"/>
<comment type="function">
    <text evidence="1">Required for formation of the rod structure of the flagellar apparatus. Together with FliI and FliH, may constitute the export apparatus of flagellin (By similarity).</text>
</comment>
<comment type="subcellular location">
    <subcellularLocation>
        <location>Cell inner membrane</location>
        <topology>Multi-pass membrane protein</topology>
    </subcellularLocation>
</comment>
<comment type="similarity">
    <text evidence="3">Belongs to the FHIPEP (flagella/HR/invasion proteins export pore) family.</text>
</comment>
<protein>
    <recommendedName>
        <fullName>Flagellar biosynthesis protein FlhA</fullName>
    </recommendedName>
</protein>
<reference key="1">
    <citation type="journal article" date="1997" name="Microbiology">
        <title>Flagellar flhA, flhB and flhE genes, organized in an operon, cluster upstream from the inv locus in Yersinia enterocolitica.</title>
        <authorList>
            <person name="Fauconnier A."/>
            <person name="Allaoui A."/>
            <person name="Campos A."/>
            <person name="van Elsen A."/>
            <person name="Cornelis G.R."/>
            <person name="Bollen A."/>
        </authorList>
    </citation>
    <scope>NUCLEOTIDE SEQUENCE [GENOMIC DNA]</scope>
    <source>
        <strain>W1024 / Serotype O:9</strain>
    </source>
</reference>
<evidence type="ECO:0000250" key="1"/>
<evidence type="ECO:0000255" key="2"/>
<evidence type="ECO:0000305" key="3"/>
<dbReference type="EMBL" id="Z48169">
    <property type="protein sequence ID" value="CAA88186.1"/>
    <property type="molecule type" value="Genomic_DNA"/>
</dbReference>
<dbReference type="PIR" id="S54214">
    <property type="entry name" value="S54214"/>
</dbReference>
<dbReference type="RefSeq" id="WP_005164472.1">
    <property type="nucleotide sequence ID" value="NZ_LR698980.1"/>
</dbReference>
<dbReference type="SMR" id="Q56887"/>
<dbReference type="STRING" id="1443113.LC20_02147"/>
<dbReference type="GeneID" id="31409510"/>
<dbReference type="eggNOG" id="COG1298">
    <property type="taxonomic scope" value="Bacteria"/>
</dbReference>
<dbReference type="OMA" id="RIRDNMQ"/>
<dbReference type="GO" id="GO:0005886">
    <property type="term" value="C:plasma membrane"/>
    <property type="evidence" value="ECO:0007669"/>
    <property type="project" value="UniProtKB-SubCell"/>
</dbReference>
<dbReference type="GO" id="GO:0044780">
    <property type="term" value="P:bacterial-type flagellum assembly"/>
    <property type="evidence" value="ECO:0007669"/>
    <property type="project" value="InterPro"/>
</dbReference>
<dbReference type="GO" id="GO:0009306">
    <property type="term" value="P:protein secretion"/>
    <property type="evidence" value="ECO:0007669"/>
    <property type="project" value="InterPro"/>
</dbReference>
<dbReference type="Gene3D" id="3.40.30.60">
    <property type="entry name" value="FHIPEP family, domain 1"/>
    <property type="match status" value="1"/>
</dbReference>
<dbReference type="Gene3D" id="1.10.8.540">
    <property type="entry name" value="FHIPEP family, domain 3"/>
    <property type="match status" value="1"/>
</dbReference>
<dbReference type="Gene3D" id="3.40.50.12790">
    <property type="entry name" value="FHIPEP family, domain 4"/>
    <property type="match status" value="1"/>
</dbReference>
<dbReference type="InterPro" id="IPR042194">
    <property type="entry name" value="FHIPEP_1"/>
</dbReference>
<dbReference type="InterPro" id="IPR042193">
    <property type="entry name" value="FHIPEP_3"/>
</dbReference>
<dbReference type="InterPro" id="IPR042196">
    <property type="entry name" value="FHIPEP_4"/>
</dbReference>
<dbReference type="InterPro" id="IPR025505">
    <property type="entry name" value="FHIPEP_CS"/>
</dbReference>
<dbReference type="InterPro" id="IPR006301">
    <property type="entry name" value="FlhA"/>
</dbReference>
<dbReference type="InterPro" id="IPR001712">
    <property type="entry name" value="T3SS_FHIPEP"/>
</dbReference>
<dbReference type="NCBIfam" id="TIGR01398">
    <property type="entry name" value="FlhA"/>
    <property type="match status" value="1"/>
</dbReference>
<dbReference type="PANTHER" id="PTHR30161:SF1">
    <property type="entry name" value="FLAGELLAR BIOSYNTHESIS PROTEIN FLHA-RELATED"/>
    <property type="match status" value="1"/>
</dbReference>
<dbReference type="PANTHER" id="PTHR30161">
    <property type="entry name" value="FLAGELLAR EXPORT PROTEIN, MEMBRANE FLHA SUBUNIT-RELATED"/>
    <property type="match status" value="1"/>
</dbReference>
<dbReference type="Pfam" id="PF00771">
    <property type="entry name" value="FHIPEP"/>
    <property type="match status" value="1"/>
</dbReference>
<dbReference type="PIRSF" id="PIRSF005419">
    <property type="entry name" value="FlhA"/>
    <property type="match status" value="1"/>
</dbReference>
<dbReference type="PRINTS" id="PR00949">
    <property type="entry name" value="TYPE3IMAPROT"/>
</dbReference>
<dbReference type="PROSITE" id="PS00994">
    <property type="entry name" value="FHIPEP"/>
    <property type="match status" value="1"/>
</dbReference>
<keyword id="KW-1005">Bacterial flagellum biogenesis</keyword>
<keyword id="KW-1006">Bacterial flagellum protein export</keyword>
<keyword id="KW-0997">Cell inner membrane</keyword>
<keyword id="KW-1003">Cell membrane</keyword>
<keyword id="KW-0472">Membrane</keyword>
<keyword id="KW-0653">Protein transport</keyword>
<keyword id="KW-0812">Transmembrane</keyword>
<keyword id="KW-1133">Transmembrane helix</keyword>
<keyword id="KW-0813">Transport</keyword>